<proteinExistence type="inferred from homology"/>
<feature type="chain" id="PRO_0000099339" description="Protein A47">
    <location>
        <begin position="1"/>
        <end position="252"/>
    </location>
</feature>
<organism>
    <name type="scientific">Vaccinia virus (strain Western Reserve)</name>
    <name type="common">VACV</name>
    <name type="synonym">Vaccinia virus (strain WR)</name>
    <dbReference type="NCBI Taxonomy" id="10254"/>
    <lineage>
        <taxon>Viruses</taxon>
        <taxon>Varidnaviria</taxon>
        <taxon>Bamfordvirae</taxon>
        <taxon>Nucleocytoviricota</taxon>
        <taxon>Pokkesviricetes</taxon>
        <taxon>Chitovirales</taxon>
        <taxon>Poxviridae</taxon>
        <taxon>Chordopoxvirinae</taxon>
        <taxon>Orthopoxvirus</taxon>
        <taxon>Vaccinia virus</taxon>
    </lineage>
</organism>
<dbReference type="EMBL" id="D11079">
    <property type="protein sequence ID" value="BAA01821.1"/>
    <property type="molecule type" value="Genomic_DNA"/>
</dbReference>
<dbReference type="EMBL" id="AY243312">
    <property type="protein sequence ID" value="AAO89452.1"/>
    <property type="molecule type" value="Genomic_DNA"/>
</dbReference>
<dbReference type="EMBL" id="M72474">
    <property type="protein sequence ID" value="AAA48314.1"/>
    <property type="molecule type" value="Genomic_DNA"/>
</dbReference>
<dbReference type="PIR" id="JQ1785">
    <property type="entry name" value="JQ1785"/>
</dbReference>
<dbReference type="RefSeq" id="YP_233055.1">
    <property type="nucleotide sequence ID" value="NC_006998.1"/>
</dbReference>
<dbReference type="SMR" id="P26673"/>
<dbReference type="DNASU" id="3707703"/>
<dbReference type="GeneID" id="3707703"/>
<dbReference type="KEGG" id="vg:3707703"/>
<dbReference type="Proteomes" id="UP000000344">
    <property type="component" value="Genome"/>
</dbReference>
<dbReference type="InterPro" id="IPR009402">
    <property type="entry name" value="Orthopox_A47"/>
</dbReference>
<dbReference type="Pfam" id="PF06334">
    <property type="entry name" value="Orthopox_A47"/>
    <property type="match status" value="1"/>
</dbReference>
<accession>P26673</accession>
<accession>Q76ZN0</accession>
<evidence type="ECO:0000305" key="1"/>
<name>A47_VACCW</name>
<reference key="1">
    <citation type="journal article" date="1991" name="J. Gen. Virol.">
        <title>Nucleotide sequence of 42 kbp of vaccinia virus strain WR from near the right inverted terminal repeat.</title>
        <authorList>
            <person name="Smith G.L."/>
            <person name="Chan Y.S."/>
            <person name="Howard S.T."/>
        </authorList>
    </citation>
    <scope>NUCLEOTIDE SEQUENCE [GENOMIC DNA]</scope>
</reference>
<reference key="2">
    <citation type="submission" date="2003-02" db="EMBL/GenBank/DDBJ databases">
        <title>Sequencing of the coding region of Vaccinia-WR to an average 9-fold redundancy and an error rate of 0.16/10kb.</title>
        <authorList>
            <person name="Esposito J.J."/>
            <person name="Frace A.M."/>
            <person name="Sammons S.A."/>
            <person name="Olsen-Rasmussen M."/>
            <person name="Osborne J."/>
            <person name="Wohlhueter R."/>
        </authorList>
    </citation>
    <scope>NUCLEOTIDE SEQUENCE [LARGE SCALE GENOMIC DNA]</scope>
</reference>
<reference key="3">
    <citation type="journal article" date="1991" name="J. Virol.">
        <title>Sequence analysis, expression, and deletion of a vaccinia virus gene encoding a homolog of profilin, a eukaryotic actin-binding protein.</title>
        <authorList>
            <person name="Blasco R."/>
            <person name="Cole N.B."/>
            <person name="Moss B."/>
        </authorList>
    </citation>
    <scope>NUCLEOTIDE SEQUENCE [GENOMIC DNA] OF 112-252</scope>
</reference>
<sequence>MGNKNIKPSKENRLSILSKDKMDSFKRGSWATSSFREKSRATIQRFSSLRREHIKVDHPDKFLELKRGIYKIIQKSSSIDVDKRTKLMSNIKTMMINPFMIEGLMTSLENLDPDNKMSYSSVMILGEFDIINISDNEAAFEFINSLLKSLLLLNTRQLKLLEYSISNDLLYAHINALEYIIKNTFNVPERQLILRGQYLTPIFSDLLKYAGLTIKSNILMWNKQFIKPVSDLYTSMRLLHCVTESYKVIGMG</sequence>
<comment type="similarity">
    <text evidence="1">Belongs to the orthopoxvirus A47 protein family.</text>
</comment>
<keyword id="KW-1185">Reference proteome</keyword>
<protein>
    <recommendedName>
        <fullName>Protein A47</fullName>
    </recommendedName>
</protein>
<gene>
    <name type="ordered locus">VACWR173</name>
    <name type="ORF">A47L</name>
</gene>
<organismHost>
    <name type="scientific">Bos taurus</name>
    <name type="common">Bovine</name>
    <dbReference type="NCBI Taxonomy" id="9913"/>
</organismHost>